<sequence length="318" mass="35923">MPSIKLNSGYDMPAVGFGCWKVDVDTCSEQIYRAIKTGYRLFDGAEDYANEKLVGAGVKKAIDEGIVKREDLFLTSKLWNNYHHPDNVEKALNRTLSDLQVDYVDLFLIHFPVTFKFVPLEEKYPPGFYCGKGDNFDYEDVPILETWKALEKLVKAGKIRSIGVSNFPGALLLDLLRGATIKPSVLQVEHHPYLQQPRLIEFAQSRGIAVTAYSSFGPQSFVELNQGRALNTSPLFENETIKAIAAKHGKSPAQVLLRWSSQRGIAIIPKSNTVPRLLENKDVNSFDLDEQDFADIAKLDINLRFNDPWDWDKIPIFV</sequence>
<gene>
    <name type="primary">XYL1</name>
    <name type="ORF">PICST_89614</name>
</gene>
<proteinExistence type="evidence at protein level"/>
<organism>
    <name type="scientific">Scheffersomyces stipitis (strain ATCC 58785 / CBS 6054 / NBRC 10063 / NRRL Y-11545)</name>
    <name type="common">Yeast</name>
    <name type="synonym">Pichia stipitis</name>
    <dbReference type="NCBI Taxonomy" id="322104"/>
    <lineage>
        <taxon>Eukaryota</taxon>
        <taxon>Fungi</taxon>
        <taxon>Dikarya</taxon>
        <taxon>Ascomycota</taxon>
        <taxon>Saccharomycotina</taxon>
        <taxon>Pichiomycetes</taxon>
        <taxon>Debaryomycetaceae</taxon>
        <taxon>Scheffersomyces</taxon>
    </lineage>
</organism>
<feature type="chain" id="PRO_0000124667" description="NAD(P)H-dependent D-xylose reductase">
    <location>
        <begin position="1"/>
        <end position="318"/>
    </location>
</feature>
<feature type="active site" description="Proton donor" evidence="1">
    <location>
        <position position="48"/>
    </location>
</feature>
<feature type="binding site" evidence="1">
    <location>
        <position position="110"/>
    </location>
    <ligand>
        <name>substrate</name>
    </ligand>
</feature>
<feature type="binding site" evidence="1">
    <location>
        <begin position="165"/>
        <end position="166"/>
    </location>
    <ligand>
        <name>NAD(+)</name>
        <dbReference type="ChEBI" id="CHEBI:57540"/>
    </ligand>
</feature>
<feature type="binding site" evidence="1">
    <location>
        <begin position="214"/>
        <end position="223"/>
    </location>
    <ligand>
        <name>NAD(+)</name>
        <dbReference type="ChEBI" id="CHEBI:57540"/>
    </ligand>
</feature>
<feature type="binding site" evidence="1">
    <location>
        <begin position="270"/>
        <end position="280"/>
    </location>
    <ligand>
        <name>NAD(+)</name>
        <dbReference type="ChEBI" id="CHEBI:57540"/>
    </ligand>
</feature>
<feature type="site" description="Lowers pKa of active site Tyr" evidence="1">
    <location>
        <position position="77"/>
    </location>
</feature>
<feature type="strand" evidence="5">
    <location>
        <begin position="3"/>
        <end position="5"/>
    </location>
</feature>
<feature type="strand" evidence="5">
    <location>
        <begin position="11"/>
        <end position="15"/>
    </location>
</feature>
<feature type="turn" evidence="5">
    <location>
        <begin position="24"/>
        <end position="26"/>
    </location>
</feature>
<feature type="helix" evidence="5">
    <location>
        <begin position="27"/>
        <end position="36"/>
    </location>
</feature>
<feature type="strand" evidence="5">
    <location>
        <begin position="41"/>
        <end position="43"/>
    </location>
</feature>
<feature type="helix" evidence="5">
    <location>
        <begin position="46"/>
        <end position="48"/>
    </location>
</feature>
<feature type="helix" evidence="5">
    <location>
        <begin position="51"/>
        <end position="63"/>
    </location>
</feature>
<feature type="helix" evidence="5">
    <location>
        <begin position="69"/>
        <end position="71"/>
    </location>
</feature>
<feature type="strand" evidence="5">
    <location>
        <begin position="73"/>
        <end position="78"/>
    </location>
</feature>
<feature type="helix" evidence="5">
    <location>
        <begin position="80"/>
        <end position="82"/>
    </location>
</feature>
<feature type="turn" evidence="5">
    <location>
        <begin position="85"/>
        <end position="87"/>
    </location>
</feature>
<feature type="helix" evidence="5">
    <location>
        <begin position="88"/>
        <end position="99"/>
    </location>
</feature>
<feature type="strand" evidence="5">
    <location>
        <begin position="104"/>
        <end position="109"/>
    </location>
</feature>
<feature type="turn" evidence="5">
    <location>
        <begin position="120"/>
        <end position="122"/>
    </location>
</feature>
<feature type="helix" evidence="5">
    <location>
        <begin position="143"/>
        <end position="155"/>
    </location>
</feature>
<feature type="strand" evidence="5">
    <location>
        <begin position="158"/>
        <end position="166"/>
    </location>
</feature>
<feature type="helix" evidence="5">
    <location>
        <begin position="169"/>
        <end position="178"/>
    </location>
</feature>
<feature type="strand" evidence="5">
    <location>
        <begin position="185"/>
        <end position="189"/>
    </location>
</feature>
<feature type="helix" evidence="5">
    <location>
        <begin position="197"/>
        <end position="205"/>
    </location>
</feature>
<feature type="strand" evidence="5">
    <location>
        <begin position="209"/>
        <end position="213"/>
    </location>
</feature>
<feature type="turn" evidence="4">
    <location>
        <begin position="215"/>
        <end position="218"/>
    </location>
</feature>
<feature type="helix" evidence="5">
    <location>
        <begin position="221"/>
        <end position="229"/>
    </location>
</feature>
<feature type="helix" evidence="5">
    <location>
        <begin position="235"/>
        <end position="237"/>
    </location>
</feature>
<feature type="helix" evidence="5">
    <location>
        <begin position="239"/>
        <end position="248"/>
    </location>
</feature>
<feature type="helix" evidence="5">
    <location>
        <begin position="252"/>
        <end position="261"/>
    </location>
</feature>
<feature type="turn" evidence="5">
    <location>
        <begin position="262"/>
        <end position="264"/>
    </location>
</feature>
<feature type="helix" evidence="5">
    <location>
        <begin position="274"/>
        <end position="279"/>
    </location>
</feature>
<feature type="helix" evidence="5">
    <location>
        <begin position="290"/>
        <end position="297"/>
    </location>
</feature>
<feature type="helix" evidence="5">
    <location>
        <begin position="309"/>
        <end position="312"/>
    </location>
</feature>
<reference key="1">
    <citation type="journal article" date="1991" name="Gene">
        <title>Cloning and expression in Saccharomyces cerevisiae of the NAD(P)H-dependent xylose reductase-encoding gene (XYL1) from the xylose-assimilating yeast Pichia stipitis.</title>
        <authorList>
            <person name="Amore R."/>
            <person name="Koetter P."/>
            <person name="Kuester C."/>
            <person name="Ciriacy M."/>
            <person name="Hollenberg C.P."/>
        </authorList>
    </citation>
    <scope>NUCLEOTIDE SEQUENCE [GENOMIC DNA]</scope>
    <source>
        <strain>ATCC 62970 / CBS 5774 / NRRL Y-11542</strain>
    </source>
</reference>
<reference key="2">
    <citation type="journal article" date="2007" name="Nat. Biotechnol.">
        <title>Genome sequence of the lignocellulose-bioconverting and xylose-fermenting yeast Pichia stipitis.</title>
        <authorList>
            <person name="Jeffries T.W."/>
            <person name="Grigoriev I.V."/>
            <person name="Grimwood J."/>
            <person name="Laplaza J.M."/>
            <person name="Aerts A."/>
            <person name="Salamov A."/>
            <person name="Schmutz J."/>
            <person name="Lindquist E."/>
            <person name="Dehal P."/>
            <person name="Shapiro H."/>
            <person name="Jin Y.-S."/>
            <person name="Passoth V."/>
            <person name="Richardson P.M."/>
        </authorList>
    </citation>
    <scope>NUCLEOTIDE SEQUENCE [LARGE SCALE GENOMIC DNA]</scope>
    <source>
        <strain>ATCC 58785 / CBS 6054 / NBRC 10063 / NRRL Y-11545</strain>
    </source>
</reference>
<reference key="3">
    <citation type="journal article" date="1985" name="Biochem. J.">
        <title>Properties of the NAD(P)H-dependent xylose reductase from the xylose-fermenting yeast Pichia stipitis.</title>
        <authorList>
            <person name="Verduyn C."/>
            <person name="Van Kleef R."/>
            <person name="Frank J."/>
            <person name="Schreuder H."/>
            <person name="Van Dijken J.P."/>
            <person name="Scheffers W.A."/>
        </authorList>
    </citation>
    <scope>FUNCTION</scope>
    <scope>ACTIVITY REGULATION</scope>
    <scope>BIOPHYSICOCHEMICAL PROPERTIES</scope>
</reference>
<accession>P31867</accession>
<accession>A3LVN7</accession>
<evidence type="ECO:0000250" key="1"/>
<evidence type="ECO:0000269" key="2">
    <source>
    </source>
</evidence>
<evidence type="ECO:0000305" key="3"/>
<evidence type="ECO:0007829" key="4">
    <source>
        <dbReference type="PDB" id="5Z6T"/>
    </source>
</evidence>
<evidence type="ECO:0007829" key="5">
    <source>
        <dbReference type="PDB" id="5Z6U"/>
    </source>
</evidence>
<comment type="function">
    <text evidence="2">Reduces D-xylose into xylitol. Has a preference for NADPH, but can also utilize NADH as cosubstrate.</text>
</comment>
<comment type="catalytic activity">
    <reaction>
        <text>xylitol + NAD(+) = D-xylose + NADH + H(+)</text>
        <dbReference type="Rhea" id="RHEA:27441"/>
        <dbReference type="ChEBI" id="CHEBI:15378"/>
        <dbReference type="ChEBI" id="CHEBI:17151"/>
        <dbReference type="ChEBI" id="CHEBI:53455"/>
        <dbReference type="ChEBI" id="CHEBI:57540"/>
        <dbReference type="ChEBI" id="CHEBI:57945"/>
        <dbReference type="EC" id="1.1.1.307"/>
    </reaction>
</comment>
<comment type="catalytic activity">
    <reaction>
        <text>xylitol + NADP(+) = D-xylose + NADPH + H(+)</text>
        <dbReference type="Rhea" id="RHEA:27445"/>
        <dbReference type="ChEBI" id="CHEBI:15378"/>
        <dbReference type="ChEBI" id="CHEBI:17151"/>
        <dbReference type="ChEBI" id="CHEBI:53455"/>
        <dbReference type="ChEBI" id="CHEBI:57783"/>
        <dbReference type="ChEBI" id="CHEBI:58349"/>
        <dbReference type="EC" id="1.1.1.307"/>
    </reaction>
</comment>
<comment type="activity regulation">
    <text evidence="2">NADP(+) is a potent inhibitor of both the NADPH- and NADH-linked xylose reduction, whereas NAD(+) showS strong inhibition only with the NADH-linked reaction.</text>
</comment>
<comment type="biophysicochemical properties">
    <kinetics>
        <KM evidence="2">42 mM for D-Xylose</KM>
        <KM evidence="2">9 uM for NADPH</KM>
        <KM evidence="2">21 mM for NADH</KM>
        <KM evidence="2">18 mM for DL-Glyceraldehyde</KM>
        <KM evidence="2">40 mM for L-Arabinose</KM>
        <KM evidence="2">310 mM for D-Ribose</KM>
        <KM evidence="2">140 mM for D-Galactose</KM>
        <KM evidence="2">420 mM for D-Glucose</KM>
    </kinetics>
    <phDependence>
        <text evidence="2">Optimum pH is 6.0.</text>
    </phDependence>
</comment>
<comment type="pathway">
    <text>Carbohydrate metabolism; D-xylose degradation.</text>
</comment>
<comment type="similarity">
    <text evidence="3">Belongs to the aldo/keto reductase family.</text>
</comment>
<keyword id="KW-0002">3D-structure</keyword>
<keyword id="KW-0119">Carbohydrate metabolism</keyword>
<keyword id="KW-0520">NAD</keyword>
<keyword id="KW-0521">NADP</keyword>
<keyword id="KW-0560">Oxidoreductase</keyword>
<keyword id="KW-1185">Reference proteome</keyword>
<keyword id="KW-0859">Xylose metabolism</keyword>
<dbReference type="EC" id="1.1.1.307"/>
<dbReference type="EMBL" id="X59465">
    <property type="protein sequence ID" value="CAA42072.1"/>
    <property type="molecule type" value="Genomic_DNA"/>
</dbReference>
<dbReference type="EMBL" id="CP000499">
    <property type="protein sequence ID" value="ABN67152.1"/>
    <property type="molecule type" value="Genomic_DNA"/>
</dbReference>
<dbReference type="PIR" id="JQ1387">
    <property type="entry name" value="JQ1387"/>
</dbReference>
<dbReference type="RefSeq" id="XP_001385181.1">
    <property type="nucleotide sequence ID" value="XM_001385144.1"/>
</dbReference>
<dbReference type="PDB" id="5Z6T">
    <property type="method" value="X-ray"/>
    <property type="resolution" value="2.00 A"/>
    <property type="chains" value="A/B=1-318"/>
</dbReference>
<dbReference type="PDB" id="5Z6U">
    <property type="method" value="X-ray"/>
    <property type="resolution" value="1.95 A"/>
    <property type="chains" value="A/B=1-318"/>
</dbReference>
<dbReference type="PDBsum" id="5Z6T"/>
<dbReference type="PDBsum" id="5Z6U"/>
<dbReference type="SMR" id="P31867"/>
<dbReference type="FunCoup" id="P31867">
    <property type="interactions" value="425"/>
</dbReference>
<dbReference type="STRING" id="322104.P31867"/>
<dbReference type="GeneID" id="4839234"/>
<dbReference type="KEGG" id="pic:PICST_89614"/>
<dbReference type="eggNOG" id="KOG1577">
    <property type="taxonomic scope" value="Eukaryota"/>
</dbReference>
<dbReference type="HOGENOM" id="CLU_023205_0_0_1"/>
<dbReference type="InParanoid" id="P31867"/>
<dbReference type="OMA" id="SNFTCTK"/>
<dbReference type="OrthoDB" id="416253at2759"/>
<dbReference type="BioCyc" id="MetaCyc:MONOMER-15496"/>
<dbReference type="BRENDA" id="1.1.1.307">
    <property type="organism ID" value="4832"/>
</dbReference>
<dbReference type="UniPathway" id="UPA00810"/>
<dbReference type="Proteomes" id="UP000002258">
    <property type="component" value="Chromosome 5"/>
</dbReference>
<dbReference type="GO" id="GO:0032866">
    <property type="term" value="F:D-xylose reductase (NADPH) activity"/>
    <property type="evidence" value="ECO:0007669"/>
    <property type="project" value="EnsemblFungi"/>
</dbReference>
<dbReference type="GO" id="GO:0003729">
    <property type="term" value="F:mRNA binding"/>
    <property type="evidence" value="ECO:0007669"/>
    <property type="project" value="EnsemblFungi"/>
</dbReference>
<dbReference type="GO" id="GO:0019568">
    <property type="term" value="P:arabinose catabolic process"/>
    <property type="evidence" value="ECO:0007669"/>
    <property type="project" value="EnsemblFungi"/>
</dbReference>
<dbReference type="GO" id="GO:0071470">
    <property type="term" value="P:cellular response to osmotic stress"/>
    <property type="evidence" value="ECO:0007669"/>
    <property type="project" value="EnsemblFungi"/>
</dbReference>
<dbReference type="GO" id="GO:0034599">
    <property type="term" value="P:cellular response to oxidative stress"/>
    <property type="evidence" value="ECO:0007669"/>
    <property type="project" value="EnsemblFungi"/>
</dbReference>
<dbReference type="GO" id="GO:0042843">
    <property type="term" value="P:D-xylose catabolic process"/>
    <property type="evidence" value="ECO:0007669"/>
    <property type="project" value="UniProtKB-UniPathway"/>
</dbReference>
<dbReference type="GO" id="GO:0019388">
    <property type="term" value="P:galactose catabolic process"/>
    <property type="evidence" value="ECO:0007669"/>
    <property type="project" value="EnsemblFungi"/>
</dbReference>
<dbReference type="CDD" id="cd19113">
    <property type="entry name" value="AKR_AKR2B1-10"/>
    <property type="match status" value="1"/>
</dbReference>
<dbReference type="FunFam" id="3.20.20.100:FF:000007">
    <property type="entry name" value="NAD(P)H-dependent D-xylose reductase xyl1"/>
    <property type="match status" value="1"/>
</dbReference>
<dbReference type="Gene3D" id="3.20.20.100">
    <property type="entry name" value="NADP-dependent oxidoreductase domain"/>
    <property type="match status" value="1"/>
</dbReference>
<dbReference type="InterPro" id="IPR020471">
    <property type="entry name" value="AKR"/>
</dbReference>
<dbReference type="InterPro" id="IPR044486">
    <property type="entry name" value="AKR2B1"/>
</dbReference>
<dbReference type="InterPro" id="IPR018170">
    <property type="entry name" value="Aldo/ket_reductase_CS"/>
</dbReference>
<dbReference type="InterPro" id="IPR023210">
    <property type="entry name" value="NADP_OxRdtase_dom"/>
</dbReference>
<dbReference type="InterPro" id="IPR036812">
    <property type="entry name" value="NADP_OxRdtase_dom_sf"/>
</dbReference>
<dbReference type="PANTHER" id="PTHR11732">
    <property type="entry name" value="ALDO/KETO REDUCTASE"/>
    <property type="match status" value="1"/>
</dbReference>
<dbReference type="Pfam" id="PF00248">
    <property type="entry name" value="Aldo_ket_red"/>
    <property type="match status" value="1"/>
</dbReference>
<dbReference type="PIRSF" id="PIRSF000097">
    <property type="entry name" value="AKR"/>
    <property type="match status" value="1"/>
</dbReference>
<dbReference type="PRINTS" id="PR00069">
    <property type="entry name" value="ALDKETRDTASE"/>
</dbReference>
<dbReference type="SUPFAM" id="SSF51430">
    <property type="entry name" value="NAD(P)-linked oxidoreductase"/>
    <property type="match status" value="1"/>
</dbReference>
<dbReference type="PROSITE" id="PS00798">
    <property type="entry name" value="ALDOKETO_REDUCTASE_1"/>
    <property type="match status" value="1"/>
</dbReference>
<dbReference type="PROSITE" id="PS00062">
    <property type="entry name" value="ALDOKETO_REDUCTASE_2"/>
    <property type="match status" value="1"/>
</dbReference>
<dbReference type="PROSITE" id="PS00063">
    <property type="entry name" value="ALDOKETO_REDUCTASE_3"/>
    <property type="match status" value="1"/>
</dbReference>
<protein>
    <recommendedName>
        <fullName>NAD(P)H-dependent D-xylose reductase</fullName>
        <shortName>XR</shortName>
        <ecNumber>1.1.1.307</ecNumber>
    </recommendedName>
</protein>
<name>XYL1_PICST</name>